<reference key="1">
    <citation type="journal article" date="1994" name="J. Biol. Chem.">
        <title>Characterization of the myosin-binding subunit of smooth muscle myosin phosphatase.</title>
        <authorList>
            <person name="Shimizu H."/>
            <person name="Ito M."/>
            <person name="Miyahara M."/>
            <person name="Ichikawa K."/>
            <person name="Okubo S."/>
            <person name="Konishi T."/>
            <person name="Naka M."/>
            <person name="Tanaka T."/>
            <person name="Hirano K."/>
            <person name="Hartshorne D.J."/>
            <person name="Nakano T."/>
        </authorList>
    </citation>
    <scope>NUCLEOTIDE SEQUENCE [MRNA]</scope>
    <source>
        <tissue>Gizzard</tissue>
    </source>
</reference>
<reference key="2">
    <citation type="submission" date="2007-01" db="UniProtKB">
        <authorList>
            <person name="Bienvenut W.V."/>
            <person name="Black E.J."/>
            <person name="Gillespie D.A."/>
        </authorList>
    </citation>
    <scope>PROTEIN SEQUENCE OF 2-14 AND 111-121</scope>
    <scope>CLEAVAGE OF INITIATOR METHIONINE</scope>
    <scope>ACETYLATION AT ALA-2</scope>
    <scope>IDENTIFICATION BY MASS SPECTROMETRY</scope>
    <source>
        <tissue>B-cell lymphoma</tissue>
    </source>
</reference>
<reference key="3">
    <citation type="journal article" date="1992" name="Eur. J. Biochem.">
        <title>The control of protein phosphatase-1 by targetting subunits. The major myosin phosphatase in avian smooth muscle is a novel form of protein phosphatase-1.</title>
        <authorList>
            <person name="Alessi D."/>
            <person name="MacDougall L.K."/>
            <person name="Sola M.M."/>
            <person name="Ikebe M."/>
            <person name="Cohen P."/>
        </authorList>
    </citation>
    <scope>PROTEIN SEQUENCE OF 147-149; 168-185; 221-233; 246-259 AND 304-319</scope>
    <scope>CATALYTIC ACTIVITY</scope>
    <scope>SUBUNIT</scope>
    <source>
        <tissue>Gizzard</tissue>
    </source>
</reference>
<reference key="4">
    <citation type="journal article" date="2004" name="Nature">
        <title>Structural basis of protein phosphatase 1 regulation.</title>
        <authorList>
            <person name="Terrak M."/>
            <person name="Kerff F."/>
            <person name="Langsetmo K."/>
            <person name="Tao T."/>
            <person name="Dominguez R."/>
        </authorList>
    </citation>
    <scope>X-RAY CRYSTALLOGRAPHY (2.7 ANGSTROMS) IN COMPLEX WITH MANGANESE IONS AND PPP1R12A</scope>
    <scope>COFACTOR</scope>
    <scope>TISSUE SPECIFICITY</scope>
    <scope>SUBUNIT</scope>
</reference>
<sequence length="327" mass="37187">MADGELNVDSLITRLLEVRGCRPGKIVQMTEAEVRGLCIKSREIFLSQPILLELEAPLKICGDIHGQYTDLLRLFEYGGFPPEANYLFLGDYVDRGKQSLETICLLLAYKIKYPENFFLLRGNHECASINRIYGFYDECKRRFNIKLWKTFTDCFNCLPIAAIVDEKIFCCHGGLSPDLQSMEQIRRIMRPTDVPDTGLLCDLLWSDPDKDVQGWGENDRGVSFTFGADVVSKFLNRHDLDLICRAHQVVEDGYEFFAKRQLVTLFSAPNYCGEFDNAGGMMSVDETLMCSFQILKPSEKKAKYQYGGLNSGRPVTPPRTANPPKKR</sequence>
<accession>P62207</accession>
<accession>P37140</accession>
<dbReference type="EC" id="3.1.3.16"/>
<dbReference type="EC" id="3.1.3.53"/>
<dbReference type="EMBL" id="D37987">
    <property type="protein sequence ID" value="BAA07203.1"/>
    <property type="molecule type" value="mRNA"/>
</dbReference>
<dbReference type="RefSeq" id="NP_990453.1">
    <property type="nucleotide sequence ID" value="NM_205122.2"/>
</dbReference>
<dbReference type="PDB" id="1S70">
    <property type="method" value="X-ray"/>
    <property type="resolution" value="2.70 A"/>
    <property type="chains" value="A=1-327"/>
</dbReference>
<dbReference type="PDBsum" id="1S70"/>
<dbReference type="SMR" id="P62207"/>
<dbReference type="BioGRID" id="676289">
    <property type="interactions" value="2"/>
</dbReference>
<dbReference type="ELM" id="P62207"/>
<dbReference type="FunCoup" id="P62207">
    <property type="interactions" value="2401"/>
</dbReference>
<dbReference type="STRING" id="9031.ENSGALP00000031272"/>
<dbReference type="GlyGen" id="P62207">
    <property type="glycosylation" value="1 site"/>
</dbReference>
<dbReference type="PaxDb" id="9031-ENSGALP00000031272"/>
<dbReference type="Ensembl" id="ENSGALT00010048228.1">
    <property type="protein sequence ID" value="ENSGALP00010028439.1"/>
    <property type="gene ID" value="ENSGALG00010019972.1"/>
</dbReference>
<dbReference type="GeneID" id="396019"/>
<dbReference type="KEGG" id="gga:396019"/>
<dbReference type="CTD" id="5500"/>
<dbReference type="VEuPathDB" id="HostDB:geneid_396019"/>
<dbReference type="eggNOG" id="KOG0374">
    <property type="taxonomic scope" value="Eukaryota"/>
</dbReference>
<dbReference type="GeneTree" id="ENSGT00940000154644"/>
<dbReference type="HOGENOM" id="CLU_004962_0_0_1"/>
<dbReference type="InParanoid" id="P62207"/>
<dbReference type="OMA" id="TVQMSEN"/>
<dbReference type="OrthoDB" id="1930084at2759"/>
<dbReference type="PhylomeDB" id="P62207"/>
<dbReference type="TreeFam" id="TF354243"/>
<dbReference type="BRENDA" id="3.1.3.16">
    <property type="organism ID" value="1306"/>
</dbReference>
<dbReference type="Reactome" id="R-GGA-2565942">
    <property type="pathway name" value="Regulation of PLK1 Activity at G2/M Transition"/>
</dbReference>
<dbReference type="Reactome" id="R-GGA-5627123">
    <property type="pathway name" value="RHO GTPases activate PAKs"/>
</dbReference>
<dbReference type="Reactome" id="R-GGA-5673000">
    <property type="pathway name" value="RAF activation"/>
</dbReference>
<dbReference type="EvolutionaryTrace" id="P62207"/>
<dbReference type="PRO" id="PR:P62207"/>
<dbReference type="Proteomes" id="UP000000539">
    <property type="component" value="Chromosome 3"/>
</dbReference>
<dbReference type="Bgee" id="ENSGALG00000010026">
    <property type="expression patterns" value="Expressed in ovary and 12 other cell types or tissues"/>
</dbReference>
<dbReference type="GO" id="GO:0005737">
    <property type="term" value="C:cytoplasm"/>
    <property type="evidence" value="ECO:0000318"/>
    <property type="project" value="GO_Central"/>
</dbReference>
<dbReference type="GO" id="GO:0005634">
    <property type="term" value="C:nucleus"/>
    <property type="evidence" value="ECO:0000318"/>
    <property type="project" value="GO_Central"/>
</dbReference>
<dbReference type="GO" id="GO:0072357">
    <property type="term" value="C:PTW/PP1 phosphatase complex"/>
    <property type="evidence" value="ECO:0000250"/>
    <property type="project" value="UniProtKB"/>
</dbReference>
<dbReference type="GO" id="GO:0046872">
    <property type="term" value="F:metal ion binding"/>
    <property type="evidence" value="ECO:0007669"/>
    <property type="project" value="UniProtKB-KW"/>
</dbReference>
<dbReference type="GO" id="GO:0017018">
    <property type="term" value="F:myosin phosphatase activity"/>
    <property type="evidence" value="ECO:0000314"/>
    <property type="project" value="UniProtKB"/>
</dbReference>
<dbReference type="GO" id="GO:0050115">
    <property type="term" value="F:myosin-light-chain-phosphatase activity"/>
    <property type="evidence" value="ECO:0000250"/>
    <property type="project" value="UniProtKB"/>
</dbReference>
<dbReference type="GO" id="GO:0004722">
    <property type="term" value="F:protein serine/threonine phosphatase activity"/>
    <property type="evidence" value="ECO:0000318"/>
    <property type="project" value="GO_Central"/>
</dbReference>
<dbReference type="GO" id="GO:0051301">
    <property type="term" value="P:cell division"/>
    <property type="evidence" value="ECO:0007669"/>
    <property type="project" value="UniProtKB-KW"/>
</dbReference>
<dbReference type="GO" id="GO:0032922">
    <property type="term" value="P:circadian regulation of gene expression"/>
    <property type="evidence" value="ECO:0000318"/>
    <property type="project" value="GO_Central"/>
</dbReference>
<dbReference type="GO" id="GO:0005977">
    <property type="term" value="P:glycogen metabolic process"/>
    <property type="evidence" value="ECO:0007669"/>
    <property type="project" value="UniProtKB-KW"/>
</dbReference>
<dbReference type="GO" id="GO:0030155">
    <property type="term" value="P:regulation of cell adhesion"/>
    <property type="evidence" value="ECO:0000250"/>
    <property type="project" value="UniProtKB"/>
</dbReference>
<dbReference type="GO" id="GO:0042752">
    <property type="term" value="P:regulation of circadian rhythm"/>
    <property type="evidence" value="ECO:0000318"/>
    <property type="project" value="GO_Central"/>
</dbReference>
<dbReference type="CDD" id="cd07414">
    <property type="entry name" value="MPP_PP1_PPKL"/>
    <property type="match status" value="1"/>
</dbReference>
<dbReference type="FunFam" id="3.60.21.10:FF:000007">
    <property type="entry name" value="Serine/threonine-protein phosphatase"/>
    <property type="match status" value="1"/>
</dbReference>
<dbReference type="Gene3D" id="3.60.21.10">
    <property type="match status" value="1"/>
</dbReference>
<dbReference type="InterPro" id="IPR004843">
    <property type="entry name" value="Calcineurin-like_PHP_ApaH"/>
</dbReference>
<dbReference type="InterPro" id="IPR029052">
    <property type="entry name" value="Metallo-depent_PP-like"/>
</dbReference>
<dbReference type="InterPro" id="IPR050341">
    <property type="entry name" value="PP1_catalytic_subunit"/>
</dbReference>
<dbReference type="InterPro" id="IPR006186">
    <property type="entry name" value="Ser/Thr-sp_prot-phosphatase"/>
</dbReference>
<dbReference type="InterPro" id="IPR031675">
    <property type="entry name" value="STPPase_N"/>
</dbReference>
<dbReference type="PANTHER" id="PTHR11668">
    <property type="entry name" value="SERINE/THREONINE PROTEIN PHOSPHATASE"/>
    <property type="match status" value="1"/>
</dbReference>
<dbReference type="PANTHER" id="PTHR11668:SF472">
    <property type="entry name" value="SERINE_THREONINE-PROTEIN PHOSPHATASE PP1-BETA CATALYTIC SUBUNIT"/>
    <property type="match status" value="1"/>
</dbReference>
<dbReference type="Pfam" id="PF00149">
    <property type="entry name" value="Metallophos"/>
    <property type="match status" value="1"/>
</dbReference>
<dbReference type="Pfam" id="PF16891">
    <property type="entry name" value="STPPase_N"/>
    <property type="match status" value="1"/>
</dbReference>
<dbReference type="PRINTS" id="PR00114">
    <property type="entry name" value="STPHPHTASE"/>
</dbReference>
<dbReference type="SMART" id="SM00156">
    <property type="entry name" value="PP2Ac"/>
    <property type="match status" value="1"/>
</dbReference>
<dbReference type="SUPFAM" id="SSF56300">
    <property type="entry name" value="Metallo-dependent phosphatases"/>
    <property type="match status" value="1"/>
</dbReference>
<dbReference type="PROSITE" id="PS00125">
    <property type="entry name" value="SER_THR_PHOSPHATASE"/>
    <property type="match status" value="1"/>
</dbReference>
<organism>
    <name type="scientific">Gallus gallus</name>
    <name type="common">Chicken</name>
    <dbReference type="NCBI Taxonomy" id="9031"/>
    <lineage>
        <taxon>Eukaryota</taxon>
        <taxon>Metazoa</taxon>
        <taxon>Chordata</taxon>
        <taxon>Craniata</taxon>
        <taxon>Vertebrata</taxon>
        <taxon>Euteleostomi</taxon>
        <taxon>Archelosauria</taxon>
        <taxon>Archosauria</taxon>
        <taxon>Dinosauria</taxon>
        <taxon>Saurischia</taxon>
        <taxon>Theropoda</taxon>
        <taxon>Coelurosauria</taxon>
        <taxon>Aves</taxon>
        <taxon>Neognathae</taxon>
        <taxon>Galloanserae</taxon>
        <taxon>Galliformes</taxon>
        <taxon>Phasianidae</taxon>
        <taxon>Phasianinae</taxon>
        <taxon>Gallus</taxon>
    </lineage>
</organism>
<keyword id="KW-0002">3D-structure</keyword>
<keyword id="KW-0007">Acetylation</keyword>
<keyword id="KW-0119">Carbohydrate metabolism</keyword>
<keyword id="KW-0131">Cell cycle</keyword>
<keyword id="KW-0132">Cell division</keyword>
<keyword id="KW-0963">Cytoplasm</keyword>
<keyword id="KW-0903">Direct protein sequencing</keyword>
<keyword id="KW-0321">Glycogen metabolism</keyword>
<keyword id="KW-0378">Hydrolase</keyword>
<keyword id="KW-0464">Manganese</keyword>
<keyword id="KW-0479">Metal-binding</keyword>
<keyword id="KW-0539">Nucleus</keyword>
<keyword id="KW-0597">Phosphoprotein</keyword>
<keyword id="KW-0904">Protein phosphatase</keyword>
<keyword id="KW-1185">Reference proteome</keyword>
<protein>
    <recommendedName>
        <fullName>Serine/threonine-protein phosphatase PP1-beta catalytic subunit</fullName>
        <shortName>PP-1B</shortName>
        <ecNumber>3.1.3.16</ecNumber>
        <ecNumber>3.1.3.53</ecNumber>
    </recommendedName>
</protein>
<evidence type="ECO:0000250" key="1"/>
<evidence type="ECO:0000256" key="2">
    <source>
        <dbReference type="SAM" id="MobiDB-lite"/>
    </source>
</evidence>
<evidence type="ECO:0000269" key="3">
    <source>
    </source>
</evidence>
<evidence type="ECO:0000269" key="4">
    <source>
    </source>
</evidence>
<evidence type="ECO:0000269" key="5">
    <source ref="2"/>
</evidence>
<evidence type="ECO:0000305" key="6"/>
<evidence type="ECO:0007829" key="7">
    <source>
        <dbReference type="PDB" id="1S70"/>
    </source>
</evidence>
<name>PP1B_CHICK</name>
<feature type="initiator methionine" description="Removed" evidence="5">
    <location>
        <position position="1"/>
    </location>
</feature>
<feature type="chain" id="PRO_0000058784" description="Serine/threonine-protein phosphatase PP1-beta catalytic subunit">
    <location>
        <begin position="2"/>
        <end position="327"/>
    </location>
</feature>
<feature type="region of interest" description="Disordered" evidence="2">
    <location>
        <begin position="305"/>
        <end position="327"/>
    </location>
</feature>
<feature type="active site" description="Proton donor" evidence="1">
    <location>
        <position position="124"/>
    </location>
</feature>
<feature type="binding site">
    <location>
        <position position="63"/>
    </location>
    <ligand>
        <name>Mn(2+)</name>
        <dbReference type="ChEBI" id="CHEBI:29035"/>
        <label>1</label>
    </ligand>
</feature>
<feature type="binding site">
    <location>
        <position position="65"/>
    </location>
    <ligand>
        <name>Mn(2+)</name>
        <dbReference type="ChEBI" id="CHEBI:29035"/>
        <label>1</label>
    </ligand>
</feature>
<feature type="binding site">
    <location>
        <position position="91"/>
    </location>
    <ligand>
        <name>Mn(2+)</name>
        <dbReference type="ChEBI" id="CHEBI:29035"/>
        <label>1</label>
    </ligand>
</feature>
<feature type="binding site">
    <location>
        <position position="91"/>
    </location>
    <ligand>
        <name>Mn(2+)</name>
        <dbReference type="ChEBI" id="CHEBI:29035"/>
        <label>2</label>
    </ligand>
</feature>
<feature type="binding site">
    <location>
        <position position="123"/>
    </location>
    <ligand>
        <name>Mn(2+)</name>
        <dbReference type="ChEBI" id="CHEBI:29035"/>
        <label>2</label>
    </ligand>
</feature>
<feature type="binding site">
    <location>
        <position position="172"/>
    </location>
    <ligand>
        <name>Mn(2+)</name>
        <dbReference type="ChEBI" id="CHEBI:29035"/>
        <label>2</label>
    </ligand>
</feature>
<feature type="binding site">
    <location>
        <position position="247"/>
    </location>
    <ligand>
        <name>Mn(2+)</name>
        <dbReference type="ChEBI" id="CHEBI:29035"/>
        <label>2</label>
    </ligand>
</feature>
<feature type="modified residue" description="N-acetylalanine" evidence="5">
    <location>
        <position position="2"/>
    </location>
</feature>
<feature type="helix" evidence="7">
    <location>
        <begin position="8"/>
        <end position="16"/>
    </location>
</feature>
<feature type="turn" evidence="7">
    <location>
        <begin position="17"/>
        <end position="20"/>
    </location>
</feature>
<feature type="helix" evidence="7">
    <location>
        <begin position="31"/>
        <end position="45"/>
    </location>
</feature>
<feature type="strand" evidence="7">
    <location>
        <begin position="50"/>
        <end position="54"/>
    </location>
</feature>
<feature type="strand" evidence="7">
    <location>
        <begin position="56"/>
        <end position="61"/>
    </location>
</feature>
<feature type="helix" evidence="7">
    <location>
        <begin position="68"/>
        <end position="78"/>
    </location>
</feature>
<feature type="strand" evidence="7">
    <location>
        <begin position="86"/>
        <end position="88"/>
    </location>
</feature>
<feature type="strand" evidence="7">
    <location>
        <begin position="93"/>
        <end position="97"/>
    </location>
</feature>
<feature type="helix" evidence="7">
    <location>
        <begin position="99"/>
        <end position="112"/>
    </location>
</feature>
<feature type="turn" evidence="7">
    <location>
        <begin position="114"/>
        <end position="116"/>
    </location>
</feature>
<feature type="strand" evidence="7">
    <location>
        <begin position="117"/>
        <end position="119"/>
    </location>
</feature>
<feature type="helix" evidence="7">
    <location>
        <begin position="127"/>
        <end position="130"/>
    </location>
</feature>
<feature type="helix" evidence="7">
    <location>
        <begin position="135"/>
        <end position="142"/>
    </location>
</feature>
<feature type="helix" evidence="7">
    <location>
        <begin position="145"/>
        <end position="155"/>
    </location>
</feature>
<feature type="strand" evidence="7">
    <location>
        <begin position="161"/>
        <end position="164"/>
    </location>
</feature>
<feature type="turn" evidence="7">
    <location>
        <begin position="165"/>
        <end position="167"/>
    </location>
</feature>
<feature type="strand" evidence="7">
    <location>
        <begin position="168"/>
        <end position="170"/>
    </location>
</feature>
<feature type="helix" evidence="7">
    <location>
        <begin position="183"/>
        <end position="186"/>
    </location>
</feature>
<feature type="strand" evidence="7">
    <location>
        <begin position="196"/>
        <end position="198"/>
    </location>
</feature>
<feature type="helix" evidence="7">
    <location>
        <begin position="199"/>
        <end position="205"/>
    </location>
</feature>
<feature type="strand" evidence="7">
    <location>
        <begin position="213"/>
        <end position="217"/>
    </location>
</feature>
<feature type="strand" evidence="7">
    <location>
        <begin position="221"/>
        <end position="226"/>
    </location>
</feature>
<feature type="helix" evidence="7">
    <location>
        <begin position="228"/>
        <end position="238"/>
    </location>
</feature>
<feature type="strand" evidence="7">
    <location>
        <begin position="241"/>
        <end position="245"/>
    </location>
</feature>
<feature type="strand" evidence="7">
    <location>
        <begin position="252"/>
        <end position="257"/>
    </location>
</feature>
<feature type="turn" evidence="7">
    <location>
        <begin position="258"/>
        <end position="261"/>
    </location>
</feature>
<feature type="strand" evidence="7">
    <location>
        <begin position="262"/>
        <end position="266"/>
    </location>
</feature>
<feature type="helix" evidence="7">
    <location>
        <begin position="271"/>
        <end position="273"/>
    </location>
</feature>
<feature type="strand" evidence="7">
    <location>
        <begin position="282"/>
        <end position="284"/>
    </location>
</feature>
<feature type="strand" evidence="7">
    <location>
        <begin position="289"/>
        <end position="292"/>
    </location>
</feature>
<comment type="function">
    <text>Protein phosphatase that associates with over 200 regulatory proteins to form highly specific holoenzymes which dephosphorylate hundreds of biological targets. Protein phosphatase (PP1) is essential for cell division, it participates in the regulation of glycogen metabolism, muscle contractility and protein synthesis. Involved in regulation of ionic conductances and long-term synaptic plasticity.</text>
</comment>
<comment type="catalytic activity">
    <reaction evidence="3">
        <text>O-phospho-L-seryl-[protein] + H2O = L-seryl-[protein] + phosphate</text>
        <dbReference type="Rhea" id="RHEA:20629"/>
        <dbReference type="Rhea" id="RHEA-COMP:9863"/>
        <dbReference type="Rhea" id="RHEA-COMP:11604"/>
        <dbReference type="ChEBI" id="CHEBI:15377"/>
        <dbReference type="ChEBI" id="CHEBI:29999"/>
        <dbReference type="ChEBI" id="CHEBI:43474"/>
        <dbReference type="ChEBI" id="CHEBI:83421"/>
        <dbReference type="EC" id="3.1.3.16"/>
    </reaction>
</comment>
<comment type="catalytic activity">
    <reaction evidence="3">
        <text>O-phospho-L-threonyl-[protein] + H2O = L-threonyl-[protein] + phosphate</text>
        <dbReference type="Rhea" id="RHEA:47004"/>
        <dbReference type="Rhea" id="RHEA-COMP:11060"/>
        <dbReference type="Rhea" id="RHEA-COMP:11605"/>
        <dbReference type="ChEBI" id="CHEBI:15377"/>
        <dbReference type="ChEBI" id="CHEBI:30013"/>
        <dbReference type="ChEBI" id="CHEBI:43474"/>
        <dbReference type="ChEBI" id="CHEBI:61977"/>
        <dbReference type="EC" id="3.1.3.16"/>
    </reaction>
</comment>
<comment type="catalytic activity">
    <reaction evidence="3">
        <text>O-phospho-L-seryl-[myosin light chain] + H2O = L-seryl-[myosin light chain] + phosphate</text>
        <dbReference type="Rhea" id="RHEA:12849"/>
        <dbReference type="Rhea" id="RHEA-COMP:13684"/>
        <dbReference type="Rhea" id="RHEA-COMP:13685"/>
        <dbReference type="ChEBI" id="CHEBI:15377"/>
        <dbReference type="ChEBI" id="CHEBI:29999"/>
        <dbReference type="ChEBI" id="CHEBI:43474"/>
        <dbReference type="ChEBI" id="CHEBI:83421"/>
        <dbReference type="EC" id="3.1.3.53"/>
    </reaction>
</comment>
<comment type="catalytic activity">
    <reaction evidence="3">
        <text>O-phospho-L-threonyl-[myosin light chain] + H2O = L-threonyl-[myosin light chain] + phosphate</text>
        <dbReference type="Rhea" id="RHEA:53988"/>
        <dbReference type="Rhea" id="RHEA-COMP:13686"/>
        <dbReference type="Rhea" id="RHEA-COMP:13687"/>
        <dbReference type="ChEBI" id="CHEBI:15377"/>
        <dbReference type="ChEBI" id="CHEBI:30013"/>
        <dbReference type="ChEBI" id="CHEBI:43474"/>
        <dbReference type="ChEBI" id="CHEBI:61977"/>
        <dbReference type="EC" id="3.1.3.53"/>
    </reaction>
</comment>
<comment type="cofactor">
    <cofactor evidence="4">
        <name>Mn(2+)</name>
        <dbReference type="ChEBI" id="CHEBI:29035"/>
    </cofactor>
    <text evidence="4">Binds 2 manganese ions per subunit.</text>
</comment>
<comment type="activity regulation">
    <text evidence="1">Inhibited by the toxins okadaic acid, tautomycin and microcystin Leu-Arg. The phosphatase activity of the PPP1R15A-PP1 complex toward EIF2S1 is specifically inhibited by Salubrinal, a drug that protects cells from endoplasmic reticulum stress (By similarity).</text>
</comment>
<comment type="subunit">
    <text evidence="1">PP1 comprises a catalytic subunit, PPP1CA, PPP1CB or PPP1CC, which is folded into its native form by inhibitor 2 and glycogen synthetase kinase 3, and then complexed to one or several targeting or regulatory subunits. The targeting or regulatory subunits determine the substrate specificity of PP1. PPP1R12A, PPP1R12B and PPP1R12C mediate binding to myosin. PPP1R3A, PPP1R3B, PPP1R3C and PPP1R3D mediate binding to glycogen (By similarity).</text>
</comment>
<comment type="subcellular location">
    <subcellularLocation>
        <location evidence="1">Cytoplasm</location>
    </subcellularLocation>
    <subcellularLocation>
        <location evidence="1">Nucleus</location>
    </subcellularLocation>
</comment>
<comment type="tissue specificity">
    <text evidence="4">Detected in gizzard (at protein level).</text>
</comment>
<comment type="similarity">
    <text evidence="6">Belongs to the PPP phosphatase family. PP-1 subfamily.</text>
</comment>
<gene>
    <name type="primary">PPP1CB</name>
</gene>
<proteinExistence type="evidence at protein level"/>